<dbReference type="EC" id="2.1.1.-" evidence="1"/>
<dbReference type="EMBL" id="CP000653">
    <property type="protein sequence ID" value="ABP62354.1"/>
    <property type="molecule type" value="Genomic_DNA"/>
</dbReference>
<dbReference type="RefSeq" id="WP_015960676.1">
    <property type="nucleotide sequence ID" value="NC_009436.1"/>
</dbReference>
<dbReference type="SMR" id="A4WF74"/>
<dbReference type="STRING" id="399742.Ent638_3697"/>
<dbReference type="KEGG" id="ent:Ent638_3697"/>
<dbReference type="eggNOG" id="COG2264">
    <property type="taxonomic scope" value="Bacteria"/>
</dbReference>
<dbReference type="HOGENOM" id="CLU_049382_4_1_6"/>
<dbReference type="OrthoDB" id="9785995at2"/>
<dbReference type="Proteomes" id="UP000000230">
    <property type="component" value="Chromosome"/>
</dbReference>
<dbReference type="GO" id="GO:0005829">
    <property type="term" value="C:cytosol"/>
    <property type="evidence" value="ECO:0007669"/>
    <property type="project" value="TreeGrafter"/>
</dbReference>
<dbReference type="GO" id="GO:0016279">
    <property type="term" value="F:protein-lysine N-methyltransferase activity"/>
    <property type="evidence" value="ECO:0007669"/>
    <property type="project" value="TreeGrafter"/>
</dbReference>
<dbReference type="GO" id="GO:0032259">
    <property type="term" value="P:methylation"/>
    <property type="evidence" value="ECO:0007669"/>
    <property type="project" value="UniProtKB-KW"/>
</dbReference>
<dbReference type="CDD" id="cd02440">
    <property type="entry name" value="AdoMet_MTases"/>
    <property type="match status" value="1"/>
</dbReference>
<dbReference type="FunFam" id="3.40.50.150:FF:000021">
    <property type="entry name" value="Ribosomal protein L11 methyltransferase"/>
    <property type="match status" value="1"/>
</dbReference>
<dbReference type="Gene3D" id="3.40.50.150">
    <property type="entry name" value="Vaccinia Virus protein VP39"/>
    <property type="match status" value="1"/>
</dbReference>
<dbReference type="HAMAP" id="MF_00735">
    <property type="entry name" value="Methyltr_PrmA"/>
    <property type="match status" value="1"/>
</dbReference>
<dbReference type="InterPro" id="IPR050078">
    <property type="entry name" value="Ribosomal_L11_MeTrfase_PrmA"/>
</dbReference>
<dbReference type="InterPro" id="IPR004498">
    <property type="entry name" value="Ribosomal_PrmA_MeTrfase"/>
</dbReference>
<dbReference type="InterPro" id="IPR029063">
    <property type="entry name" value="SAM-dependent_MTases_sf"/>
</dbReference>
<dbReference type="NCBIfam" id="TIGR00406">
    <property type="entry name" value="prmA"/>
    <property type="match status" value="1"/>
</dbReference>
<dbReference type="PANTHER" id="PTHR43648">
    <property type="entry name" value="ELECTRON TRANSFER FLAVOPROTEIN BETA SUBUNIT LYSINE METHYLTRANSFERASE"/>
    <property type="match status" value="1"/>
</dbReference>
<dbReference type="PANTHER" id="PTHR43648:SF1">
    <property type="entry name" value="ELECTRON TRANSFER FLAVOPROTEIN BETA SUBUNIT LYSINE METHYLTRANSFERASE"/>
    <property type="match status" value="1"/>
</dbReference>
<dbReference type="Pfam" id="PF06325">
    <property type="entry name" value="PrmA"/>
    <property type="match status" value="1"/>
</dbReference>
<dbReference type="PIRSF" id="PIRSF000401">
    <property type="entry name" value="RPL11_MTase"/>
    <property type="match status" value="1"/>
</dbReference>
<dbReference type="SUPFAM" id="SSF53335">
    <property type="entry name" value="S-adenosyl-L-methionine-dependent methyltransferases"/>
    <property type="match status" value="1"/>
</dbReference>
<protein>
    <recommendedName>
        <fullName evidence="1">Ribosomal protein L11 methyltransferase</fullName>
        <shortName evidence="1">L11 Mtase</shortName>
        <ecNumber evidence="1">2.1.1.-</ecNumber>
    </recommendedName>
</protein>
<organism>
    <name type="scientific">Enterobacter sp. (strain 638)</name>
    <dbReference type="NCBI Taxonomy" id="399742"/>
    <lineage>
        <taxon>Bacteria</taxon>
        <taxon>Pseudomonadati</taxon>
        <taxon>Pseudomonadota</taxon>
        <taxon>Gammaproteobacteria</taxon>
        <taxon>Enterobacterales</taxon>
        <taxon>Enterobacteriaceae</taxon>
        <taxon>Enterobacter</taxon>
    </lineage>
</organism>
<feature type="chain" id="PRO_1000062121" description="Ribosomal protein L11 methyltransferase">
    <location>
        <begin position="1"/>
        <end position="293"/>
    </location>
</feature>
<feature type="binding site" evidence="1">
    <location>
        <position position="145"/>
    </location>
    <ligand>
        <name>S-adenosyl-L-methionine</name>
        <dbReference type="ChEBI" id="CHEBI:59789"/>
    </ligand>
</feature>
<feature type="binding site" evidence="1">
    <location>
        <position position="166"/>
    </location>
    <ligand>
        <name>S-adenosyl-L-methionine</name>
        <dbReference type="ChEBI" id="CHEBI:59789"/>
    </ligand>
</feature>
<feature type="binding site" evidence="1">
    <location>
        <position position="188"/>
    </location>
    <ligand>
        <name>S-adenosyl-L-methionine</name>
        <dbReference type="ChEBI" id="CHEBI:59789"/>
    </ligand>
</feature>
<feature type="binding site" evidence="1">
    <location>
        <position position="230"/>
    </location>
    <ligand>
        <name>S-adenosyl-L-methionine</name>
        <dbReference type="ChEBI" id="CHEBI:59789"/>
    </ligand>
</feature>
<sequence>MPWIQLKLNTTGANAEELSDALMEVGSVSITFQDTHDTPVFEPLPGETRLWGDTDVIGLFDAETDMKDVVAILENHPLLGAGFVHKIEQLEDKDWEREWMDNFHPMQFGKRLWICPSWRDVPDPNAVNVMLDPGLAFGTGTHPTTSLCLQWLDGLDLEGKTVIDFGCGSGILAIAALKLGAAKAIGIDIDPQAIQASRDNAQRNGVSDRLELYLPNDQPDIMKADVVVANILAGPLRELAPLISVLPVEGGLLGLSGILASQADSVCEAYTELFTLDPVVEKEEWCRITGRKK</sequence>
<comment type="function">
    <text evidence="1">Methylates ribosomal protein L11.</text>
</comment>
<comment type="catalytic activity">
    <reaction evidence="1">
        <text>L-lysyl-[protein] + 3 S-adenosyl-L-methionine = N(6),N(6),N(6)-trimethyl-L-lysyl-[protein] + 3 S-adenosyl-L-homocysteine + 3 H(+)</text>
        <dbReference type="Rhea" id="RHEA:54192"/>
        <dbReference type="Rhea" id="RHEA-COMP:9752"/>
        <dbReference type="Rhea" id="RHEA-COMP:13826"/>
        <dbReference type="ChEBI" id="CHEBI:15378"/>
        <dbReference type="ChEBI" id="CHEBI:29969"/>
        <dbReference type="ChEBI" id="CHEBI:57856"/>
        <dbReference type="ChEBI" id="CHEBI:59789"/>
        <dbReference type="ChEBI" id="CHEBI:61961"/>
    </reaction>
</comment>
<comment type="subcellular location">
    <subcellularLocation>
        <location evidence="1">Cytoplasm</location>
    </subcellularLocation>
</comment>
<comment type="similarity">
    <text evidence="1">Belongs to the methyltransferase superfamily. PrmA family.</text>
</comment>
<name>PRMA_ENT38</name>
<reference key="1">
    <citation type="journal article" date="2010" name="PLoS Genet.">
        <title>Genome sequence of the plant growth promoting endophytic bacterium Enterobacter sp. 638.</title>
        <authorList>
            <person name="Taghavi S."/>
            <person name="van der Lelie D."/>
            <person name="Hoffman A."/>
            <person name="Zhang Y.B."/>
            <person name="Walla M.D."/>
            <person name="Vangronsveld J."/>
            <person name="Newman L."/>
            <person name="Monchy S."/>
        </authorList>
    </citation>
    <scope>NUCLEOTIDE SEQUENCE [LARGE SCALE GENOMIC DNA]</scope>
    <source>
        <strain>638</strain>
    </source>
</reference>
<accession>A4WF74</accession>
<evidence type="ECO:0000255" key="1">
    <source>
        <dbReference type="HAMAP-Rule" id="MF_00735"/>
    </source>
</evidence>
<gene>
    <name evidence="1" type="primary">prmA</name>
    <name type="ordered locus">Ent638_3697</name>
</gene>
<proteinExistence type="inferred from homology"/>
<keyword id="KW-0963">Cytoplasm</keyword>
<keyword id="KW-0489">Methyltransferase</keyword>
<keyword id="KW-0949">S-adenosyl-L-methionine</keyword>
<keyword id="KW-0808">Transferase</keyword>